<keyword id="KW-0240">DNA-directed RNA polymerase</keyword>
<keyword id="KW-0548">Nucleotidyltransferase</keyword>
<keyword id="KW-0804">Transcription</keyword>
<keyword id="KW-0808">Transferase</keyword>
<evidence type="ECO:0000255" key="1">
    <source>
        <dbReference type="HAMAP-Rule" id="MF_00059"/>
    </source>
</evidence>
<feature type="chain" id="PRO_0000264538" description="DNA-directed RNA polymerase subunit alpha">
    <location>
        <begin position="1"/>
        <end position="341"/>
    </location>
</feature>
<feature type="region of interest" description="Alpha N-terminal domain (alpha-NTD)" evidence="1">
    <location>
        <begin position="1"/>
        <end position="237"/>
    </location>
</feature>
<feature type="region of interest" description="Alpha C-terminal domain (alpha-CTD)" evidence="1">
    <location>
        <begin position="247"/>
        <end position="341"/>
    </location>
</feature>
<accession>Q1RHP5</accession>
<proteinExistence type="inferred from homology"/>
<gene>
    <name evidence="1" type="primary">rpoA</name>
    <name type="ordered locus">RBE_1038</name>
</gene>
<comment type="function">
    <text evidence="1">DNA-dependent RNA polymerase catalyzes the transcription of DNA into RNA using the four ribonucleoside triphosphates as substrates.</text>
</comment>
<comment type="catalytic activity">
    <reaction evidence="1">
        <text>RNA(n) + a ribonucleoside 5'-triphosphate = RNA(n+1) + diphosphate</text>
        <dbReference type="Rhea" id="RHEA:21248"/>
        <dbReference type="Rhea" id="RHEA-COMP:14527"/>
        <dbReference type="Rhea" id="RHEA-COMP:17342"/>
        <dbReference type="ChEBI" id="CHEBI:33019"/>
        <dbReference type="ChEBI" id="CHEBI:61557"/>
        <dbReference type="ChEBI" id="CHEBI:140395"/>
        <dbReference type="EC" id="2.7.7.6"/>
    </reaction>
</comment>
<comment type="subunit">
    <text evidence="1">Homodimer. The RNAP catalytic core consists of 2 alpha, 1 beta, 1 beta' and 1 omega subunit. When a sigma factor is associated with the core the holoenzyme is formed, which can initiate transcription.</text>
</comment>
<comment type="domain">
    <text evidence="1">The N-terminal domain is essential for RNAP assembly and basal transcription, whereas the C-terminal domain is involved in interaction with transcriptional regulators and with upstream promoter elements.</text>
</comment>
<comment type="similarity">
    <text evidence="1">Belongs to the RNA polymerase alpha chain family.</text>
</comment>
<sequence>MLSLSKNWNALIKTDKVSYESFPETNNKSKIIVEPLERGFGLTLGNAMRRVLLSSLQGAAVTSIKIPGIEHEFSSIPGVKEDISEIILNVKGIEIKMHVAEKRVIRLKATGPGAITAGMIEAGHDVEILNPDHVICNLAKNKQFEMELTCKVGKGYTLSTNNNEDNNLPIGEIAIDALFNPVKSVTYKVENTRIGQVTDYDKLIMFVETNGDILPEMAVGLAARILQEQLQLFISFEEQEEDKQVKTDALPFSPYLLKRVDELELSVRSANCLKNDNIIYIGDLVKRTEADMLRTPNFGRKSLNEIKEILAKFSLRFGMDVPDWPPENIHELSKRYEDSYN</sequence>
<dbReference type="EC" id="2.7.7.6" evidence="1"/>
<dbReference type="EMBL" id="CP000087">
    <property type="protein sequence ID" value="ABE05119.1"/>
    <property type="molecule type" value="Genomic_DNA"/>
</dbReference>
<dbReference type="RefSeq" id="WP_011477697.1">
    <property type="nucleotide sequence ID" value="NC_007940.1"/>
</dbReference>
<dbReference type="SMR" id="Q1RHP5"/>
<dbReference type="KEGG" id="rbe:RBE_1038"/>
<dbReference type="eggNOG" id="COG0202">
    <property type="taxonomic scope" value="Bacteria"/>
</dbReference>
<dbReference type="HOGENOM" id="CLU_053084_0_0_5"/>
<dbReference type="OrthoDB" id="9805706at2"/>
<dbReference type="Proteomes" id="UP000001951">
    <property type="component" value="Chromosome"/>
</dbReference>
<dbReference type="GO" id="GO:0005737">
    <property type="term" value="C:cytoplasm"/>
    <property type="evidence" value="ECO:0007669"/>
    <property type="project" value="UniProtKB-ARBA"/>
</dbReference>
<dbReference type="GO" id="GO:0000428">
    <property type="term" value="C:DNA-directed RNA polymerase complex"/>
    <property type="evidence" value="ECO:0007669"/>
    <property type="project" value="UniProtKB-KW"/>
</dbReference>
<dbReference type="GO" id="GO:0003677">
    <property type="term" value="F:DNA binding"/>
    <property type="evidence" value="ECO:0007669"/>
    <property type="project" value="UniProtKB-UniRule"/>
</dbReference>
<dbReference type="GO" id="GO:0003899">
    <property type="term" value="F:DNA-directed RNA polymerase activity"/>
    <property type="evidence" value="ECO:0007669"/>
    <property type="project" value="UniProtKB-UniRule"/>
</dbReference>
<dbReference type="GO" id="GO:0046983">
    <property type="term" value="F:protein dimerization activity"/>
    <property type="evidence" value="ECO:0007669"/>
    <property type="project" value="InterPro"/>
</dbReference>
<dbReference type="GO" id="GO:0006351">
    <property type="term" value="P:DNA-templated transcription"/>
    <property type="evidence" value="ECO:0007669"/>
    <property type="project" value="UniProtKB-UniRule"/>
</dbReference>
<dbReference type="CDD" id="cd06928">
    <property type="entry name" value="RNAP_alpha_NTD"/>
    <property type="match status" value="1"/>
</dbReference>
<dbReference type="FunFam" id="1.10.150.20:FF:000001">
    <property type="entry name" value="DNA-directed RNA polymerase subunit alpha"/>
    <property type="match status" value="1"/>
</dbReference>
<dbReference type="FunFam" id="2.170.120.12:FF:000001">
    <property type="entry name" value="DNA-directed RNA polymerase subunit alpha"/>
    <property type="match status" value="1"/>
</dbReference>
<dbReference type="Gene3D" id="1.10.150.20">
    <property type="entry name" value="5' to 3' exonuclease, C-terminal subdomain"/>
    <property type="match status" value="1"/>
</dbReference>
<dbReference type="Gene3D" id="2.170.120.12">
    <property type="entry name" value="DNA-directed RNA polymerase, insert domain"/>
    <property type="match status" value="1"/>
</dbReference>
<dbReference type="Gene3D" id="3.30.1360.10">
    <property type="entry name" value="RNA polymerase, RBP11-like subunit"/>
    <property type="match status" value="1"/>
</dbReference>
<dbReference type="HAMAP" id="MF_00059">
    <property type="entry name" value="RNApol_bact_RpoA"/>
    <property type="match status" value="1"/>
</dbReference>
<dbReference type="InterPro" id="IPR011262">
    <property type="entry name" value="DNA-dir_RNA_pol_insert"/>
</dbReference>
<dbReference type="InterPro" id="IPR011263">
    <property type="entry name" value="DNA-dir_RNA_pol_RpoA/D/Rpb3"/>
</dbReference>
<dbReference type="InterPro" id="IPR011773">
    <property type="entry name" value="DNA-dir_RpoA"/>
</dbReference>
<dbReference type="InterPro" id="IPR036603">
    <property type="entry name" value="RBP11-like"/>
</dbReference>
<dbReference type="InterPro" id="IPR011260">
    <property type="entry name" value="RNAP_asu_C"/>
</dbReference>
<dbReference type="InterPro" id="IPR036643">
    <property type="entry name" value="RNApol_insert_sf"/>
</dbReference>
<dbReference type="NCBIfam" id="NF003513">
    <property type="entry name" value="PRK05182.1-2"/>
    <property type="match status" value="1"/>
</dbReference>
<dbReference type="NCBIfam" id="NF003519">
    <property type="entry name" value="PRK05182.2-5"/>
    <property type="match status" value="1"/>
</dbReference>
<dbReference type="NCBIfam" id="TIGR02027">
    <property type="entry name" value="rpoA"/>
    <property type="match status" value="1"/>
</dbReference>
<dbReference type="Pfam" id="PF01000">
    <property type="entry name" value="RNA_pol_A_bac"/>
    <property type="match status" value="1"/>
</dbReference>
<dbReference type="Pfam" id="PF03118">
    <property type="entry name" value="RNA_pol_A_CTD"/>
    <property type="match status" value="1"/>
</dbReference>
<dbReference type="Pfam" id="PF01193">
    <property type="entry name" value="RNA_pol_L"/>
    <property type="match status" value="1"/>
</dbReference>
<dbReference type="SMART" id="SM00662">
    <property type="entry name" value="RPOLD"/>
    <property type="match status" value="1"/>
</dbReference>
<dbReference type="SUPFAM" id="SSF47789">
    <property type="entry name" value="C-terminal domain of RNA polymerase alpha subunit"/>
    <property type="match status" value="1"/>
</dbReference>
<dbReference type="SUPFAM" id="SSF56553">
    <property type="entry name" value="Insert subdomain of RNA polymerase alpha subunit"/>
    <property type="match status" value="1"/>
</dbReference>
<dbReference type="SUPFAM" id="SSF55257">
    <property type="entry name" value="RBP11-like subunits of RNA polymerase"/>
    <property type="match status" value="1"/>
</dbReference>
<name>RPOA_RICBR</name>
<reference key="1">
    <citation type="journal article" date="2006" name="PLoS Genet.">
        <title>Genome sequence of Rickettsia bellii illuminates the role of amoebae in gene exchanges between intracellular pathogens.</title>
        <authorList>
            <person name="Ogata H."/>
            <person name="La Scola B."/>
            <person name="Audic S."/>
            <person name="Renesto P."/>
            <person name="Blanc G."/>
            <person name="Robert C."/>
            <person name="Fournier P.-E."/>
            <person name="Claverie J.-M."/>
            <person name="Raoult D."/>
        </authorList>
    </citation>
    <scope>NUCLEOTIDE SEQUENCE [LARGE SCALE GENOMIC DNA]</scope>
    <source>
        <strain>RML369-C</strain>
    </source>
</reference>
<protein>
    <recommendedName>
        <fullName evidence="1">DNA-directed RNA polymerase subunit alpha</fullName>
        <shortName evidence="1">RNAP subunit alpha</shortName>
        <ecNumber evidence="1">2.7.7.6</ecNumber>
    </recommendedName>
    <alternativeName>
        <fullName evidence="1">RNA polymerase subunit alpha</fullName>
    </alternativeName>
    <alternativeName>
        <fullName evidence="1">Transcriptase subunit alpha</fullName>
    </alternativeName>
</protein>
<organism>
    <name type="scientific">Rickettsia bellii (strain RML369-C)</name>
    <dbReference type="NCBI Taxonomy" id="336407"/>
    <lineage>
        <taxon>Bacteria</taxon>
        <taxon>Pseudomonadati</taxon>
        <taxon>Pseudomonadota</taxon>
        <taxon>Alphaproteobacteria</taxon>
        <taxon>Rickettsiales</taxon>
        <taxon>Rickettsiaceae</taxon>
        <taxon>Rickettsieae</taxon>
        <taxon>Rickettsia</taxon>
        <taxon>belli group</taxon>
    </lineage>
</organism>